<organismHost>
    <name type="scientific">Acanthamoeba polyphaga</name>
    <name type="common">Amoeba</name>
    <dbReference type="NCBI Taxonomy" id="5757"/>
</organismHost>
<reference key="1">
    <citation type="journal article" date="2004" name="Science">
        <title>The 1.2-megabase genome sequence of Mimivirus.</title>
        <authorList>
            <person name="Raoult D."/>
            <person name="Audic S."/>
            <person name="Robert C."/>
            <person name="Abergel C."/>
            <person name="Renesto P."/>
            <person name="Ogata H."/>
            <person name="La Scola B."/>
            <person name="Susan M."/>
            <person name="Claverie J.-M."/>
        </authorList>
    </citation>
    <scope>NUCLEOTIDE SEQUENCE [LARGE SCALE GENOMIC DNA]</scope>
    <source>
        <strain>Rowbotham-Bradford</strain>
    </source>
</reference>
<proteinExistence type="predicted"/>
<sequence>MSYFYEKCNCKTSITYSFFMDKLEKLEKMSTIINNFDLESYGLKYYCQYPDCKKCQTNQFYQLENIIWPNNIRHIIKHHHSYPSKYFTNIVIYTVCTNDYIINPPIKINTKNISDFSYVQLSYNKLLIIDALFRQGSYPRYLVPKNHSNPSTRFIYSEHSGVLTLKNSVIDNIIVSTESSRIDSNDTDIYLPTNIDLMKNHEFLFHTHPNSITYAGRLKNNIIYEFPSANDILNFIKYHNTGIAQASIIAAPEGIYVIRPIEYNRDFKINLENFTDLKKYILKLENKAVKKLSDVPNLSDPDTFHENVSHNFSYIKLYNKYIRQYNIFVEFYPRKKKNNEWILPSIYLQRISTSK</sequence>
<feature type="chain" id="PRO_0000251117" description="Uncharacterized protein R413">
    <location>
        <begin position="1"/>
        <end position="355"/>
    </location>
</feature>
<protein>
    <recommendedName>
        <fullName>Uncharacterized protein R413</fullName>
    </recommendedName>
</protein>
<accession>Q5UQK7</accession>
<name>YR413_MIMIV</name>
<organism>
    <name type="scientific">Acanthamoeba polyphaga mimivirus</name>
    <name type="common">APMV</name>
    <dbReference type="NCBI Taxonomy" id="212035"/>
    <lineage>
        <taxon>Viruses</taxon>
        <taxon>Varidnaviria</taxon>
        <taxon>Bamfordvirae</taxon>
        <taxon>Nucleocytoviricota</taxon>
        <taxon>Megaviricetes</taxon>
        <taxon>Imitervirales</taxon>
        <taxon>Mimiviridae</taxon>
        <taxon>Megamimivirinae</taxon>
        <taxon>Mimivirus</taxon>
        <taxon>Mimivirus bradfordmassiliense</taxon>
    </lineage>
</organism>
<keyword id="KW-1185">Reference proteome</keyword>
<dbReference type="EMBL" id="AY653733">
    <property type="protein sequence ID" value="AAV50682.1"/>
    <property type="molecule type" value="Genomic_DNA"/>
</dbReference>
<dbReference type="KEGG" id="vg:9925034"/>
<dbReference type="OrthoDB" id="10376at10239"/>
<dbReference type="Proteomes" id="UP000001134">
    <property type="component" value="Genome"/>
</dbReference>
<gene>
    <name type="ordered locus">MIMI_R413</name>
</gene>